<accession>G9N4A5</accession>
<name>VIRH_HYPVG</name>
<organism>
    <name type="scientific">Hypocrea virens (strain Gv29-8 / FGSC 10586)</name>
    <name type="common">Gliocladium virens</name>
    <name type="synonym">Trichoderma virens</name>
    <dbReference type="NCBI Taxonomy" id="413071"/>
    <lineage>
        <taxon>Eukaryota</taxon>
        <taxon>Fungi</taxon>
        <taxon>Dikarya</taxon>
        <taxon>Ascomycota</taxon>
        <taxon>Pezizomycotina</taxon>
        <taxon>Sordariomycetes</taxon>
        <taxon>Hypocreomycetidae</taxon>
        <taxon>Hypocreales</taxon>
        <taxon>Hypocreaceae</taxon>
        <taxon>Trichoderma</taxon>
    </lineage>
</organism>
<gene>
    <name evidence="2" type="primary">virH</name>
    <name type="ORF">TRIVIDRAFT_68451</name>
</gene>
<keyword id="KW-0560">Oxidoreductase</keyword>
<keyword id="KW-1185">Reference proteome</keyword>
<dbReference type="EC" id="1.-.-.-" evidence="4"/>
<dbReference type="EMBL" id="ABDF02000086">
    <property type="protein sequence ID" value="EHK18431.1"/>
    <property type="molecule type" value="Genomic_DNA"/>
</dbReference>
<dbReference type="RefSeq" id="XP_013952631.1">
    <property type="nucleotide sequence ID" value="XM_014097156.1"/>
</dbReference>
<dbReference type="EnsemblFungi" id="EHK18431">
    <property type="protein sequence ID" value="EHK18431"/>
    <property type="gene ID" value="TRIVIDRAFT_68451"/>
</dbReference>
<dbReference type="GeneID" id="25797099"/>
<dbReference type="VEuPathDB" id="FungiDB:TRIVIDRAFT_68451"/>
<dbReference type="eggNOG" id="ENOG502SJU9">
    <property type="taxonomic scope" value="Eukaryota"/>
</dbReference>
<dbReference type="HOGENOM" id="CLU_089363_0_0_1"/>
<dbReference type="InParanoid" id="G9N4A5"/>
<dbReference type="OMA" id="FKVWAEP"/>
<dbReference type="OrthoDB" id="9976870at2759"/>
<dbReference type="Proteomes" id="UP000007115">
    <property type="component" value="Unassembled WGS sequence"/>
</dbReference>
<dbReference type="GO" id="GO:0016491">
    <property type="term" value="F:oxidoreductase activity"/>
    <property type="evidence" value="ECO:0007669"/>
    <property type="project" value="UniProtKB-KW"/>
</dbReference>
<dbReference type="Gene3D" id="2.60.120.10">
    <property type="entry name" value="Jelly Rolls"/>
    <property type="match status" value="1"/>
</dbReference>
<dbReference type="InterPro" id="IPR014710">
    <property type="entry name" value="RmlC-like_jellyroll"/>
</dbReference>
<dbReference type="InterPro" id="IPR011051">
    <property type="entry name" value="RmlC_Cupin_sf"/>
</dbReference>
<dbReference type="SUPFAM" id="SSF51182">
    <property type="entry name" value="RmlC-like cupins"/>
    <property type="match status" value="1"/>
</dbReference>
<comment type="function">
    <text evidence="1">Probable oxidoreductase; part of the gene cluster that mediates the biosynthesis of virensols and trichoxide, fungal natural products that contain or are derived from a salicylaldehyde core (PubMed:31790246). The pathway begins with the synthesis of the reduced chain in virensol C by the highly reducing polyketide synthase virA via condensation of one acetate and 8 malonate units (PubMed:31790246). VirA has interesting programming rules since the first 2 ketides are fully reduced, the 3 following ketides undergo beta-dehydration, and the last 3 ketides are only reduced to beta-hydroxys to yield the trihydroxy portion (PubMed:31790246). The production of aldehyde virensol C by virA alone is surprising, since virA does not contain a reductase (R) domain that is typically associated with reductive product release in HRPKS (PubMed:31790246). The cupin-domain enzyme virC is involved in enhancing virA product turnover (PubMed:31790246). The short-chain dehydrogenase virB then oxidizes the C-7 alcohol of virensol C to a ketone, yielding virensol D (PubMed:31790246). Virensol D is further transformed to salicylaldehyde 5-deoxyaurocitrin by the short-chain dehydrogenase virD (PubMed:31790246). VirD catalyzes the dehydrogenation of C-3 to form the beta-ketone aldehyde, which is followed by the generation of the nucleophilic C-2 that is required for the intramolecular aldol condensation between C-2 and C-7, itself followed by dehydration and aromatization which leads to salicylaldehyde 5-deoxyaurocitrin (PubMed:31790246). While the dehydrogenation of virensol D is definitely catalyzed by virD, the aldol condensation and dehydration may be uncatalyzed or assisted by virD (PubMed:31790246). The short chain dehydrogenase virG then converts salicylaldehyde 5-deoxyaurocitrin into virensol B which is further hydroxylated by the cytochrome P450 monooxygenase virE to yield the hydroquinone virensol A (PubMed:31790246). VirI then may oxidize virensol A to form the quinone, while virH performs the epoxidation (PubMed:31790246). Finally, the two remaining short-chain dehydrogenases, virK and virL, are probably responsible for reducing the ketones to the corresponding alcohols to furnish the epoxycyclohexanol structure in trichoxide (PubMed:31790246).</text>
</comment>
<comment type="pathway">
    <text evidence="1">Secondary metabolite biosynthesis.</text>
</comment>
<comment type="similarity">
    <text evidence="3">Belongs to the oxidoreductase OpS7 family.</text>
</comment>
<evidence type="ECO:0000269" key="1">
    <source>
    </source>
</evidence>
<evidence type="ECO:0000303" key="2">
    <source>
    </source>
</evidence>
<evidence type="ECO:0000305" key="3"/>
<evidence type="ECO:0000305" key="4">
    <source>
    </source>
</evidence>
<feature type="chain" id="PRO_0000449287" description="Probable oxidoreductase virH">
    <location>
        <begin position="1"/>
        <end position="219"/>
    </location>
</feature>
<protein>
    <recommendedName>
        <fullName evidence="2">Probable oxidoreductase virH</fullName>
        <ecNumber evidence="4">1.-.-.-</ecNumber>
    </recommendedName>
    <alternativeName>
        <fullName evidence="2">Trichoxide biosynthesis protein H</fullName>
    </alternativeName>
    <alternativeName>
        <fullName evidence="2">Virensol biosynthesis cluster protein H</fullName>
    </alternativeName>
</protein>
<sequence length="219" mass="25328">MVCAWQLWLSPRPKRSVIASGSHIYSNDDAALFEFLKEDDGRWVVRETHYINNPLVKNGLSGPPLHIHWKQAEYFKVEQGVIGIHKNGKQLRVTKDDGVIEVPAGTRHKFWSHPSNQEDLVFKVWAEPQGLDHSFDEKFIRNLIGYQRDCKMANMAPSVFQLMLICYDCATLATPPFWVPLWLLTSIQYVLAYWIGGHLLGYKPSYSEYYREPGDKKTM</sequence>
<reference key="1">
    <citation type="journal article" date="2011" name="Genome Biol.">
        <title>Comparative genome sequence analysis underscores mycoparasitism as the ancestral life style of Trichoderma.</title>
        <authorList>
            <person name="Kubicek C.P."/>
            <person name="Herrera-Estrella A."/>
            <person name="Seidl-Seiboth V."/>
            <person name="Martinez D.A."/>
            <person name="Druzhinina I.S."/>
            <person name="Thon M."/>
            <person name="Zeilinger S."/>
            <person name="Casas-Flores S."/>
            <person name="Horwitz B.A."/>
            <person name="Mukherjee P.K."/>
            <person name="Mukherjee M."/>
            <person name="Kredics L."/>
            <person name="Alcaraz L.D."/>
            <person name="Aerts A."/>
            <person name="Antal Z."/>
            <person name="Atanasova L."/>
            <person name="Cervantes-Badillo M.G."/>
            <person name="Challacombe J."/>
            <person name="Chertkov O."/>
            <person name="McCluskey K."/>
            <person name="Coulpier F."/>
            <person name="Deshpande N."/>
            <person name="von Doehren H."/>
            <person name="Ebbole D.J."/>
            <person name="Esquivel-Naranjo E.U."/>
            <person name="Fekete E."/>
            <person name="Flipphi M."/>
            <person name="Glaser F."/>
            <person name="Gomez-Rodriguez E.Y."/>
            <person name="Gruber S."/>
            <person name="Han C."/>
            <person name="Henrissat B."/>
            <person name="Hermosa R."/>
            <person name="Hernandez-Onate M."/>
            <person name="Karaffa L."/>
            <person name="Kosti I."/>
            <person name="Le Crom S."/>
            <person name="Lindquist E."/>
            <person name="Lucas S."/>
            <person name="Luebeck M."/>
            <person name="Luebeck P.S."/>
            <person name="Margeot A."/>
            <person name="Metz B."/>
            <person name="Misra M."/>
            <person name="Nevalainen H."/>
            <person name="Omann M."/>
            <person name="Packer N."/>
            <person name="Perrone G."/>
            <person name="Uresti-Rivera E.E."/>
            <person name="Salamov A."/>
            <person name="Schmoll M."/>
            <person name="Seiboth B."/>
            <person name="Shapiro H."/>
            <person name="Sukno S."/>
            <person name="Tamayo-Ramos J.A."/>
            <person name="Tisch D."/>
            <person name="Wiest A."/>
            <person name="Wilkinson H.H."/>
            <person name="Zhang M."/>
            <person name="Coutinho P.M."/>
            <person name="Kenerley C.M."/>
            <person name="Monte E."/>
            <person name="Baker S.E."/>
            <person name="Grigoriev I.V."/>
        </authorList>
    </citation>
    <scope>NUCLEOTIDE SEQUENCE [LARGE SCALE GENOMIC DNA]</scope>
    <source>
        <strain>Gv29-8 / FGSC 10586</strain>
    </source>
</reference>
<reference key="2">
    <citation type="journal article" date="2019" name="J. Am. Chem. Soc.">
        <title>Fungal highly reducing polyketide synthases biosynthesize salicylaldehydes that are precursors to epoxycyclohexenol natural products.</title>
        <authorList>
            <person name="Liu L."/>
            <person name="Tang M.C."/>
            <person name="Tang Y."/>
        </authorList>
    </citation>
    <scope>FUNCTION</scope>
    <scope>PATHWAY</scope>
</reference>
<proteinExistence type="inferred from homology"/>